<keyword id="KW-0030">Aminoacyl-tRNA synthetase</keyword>
<keyword id="KW-0067">ATP-binding</keyword>
<keyword id="KW-0963">Cytoplasm</keyword>
<keyword id="KW-0436">Ligase</keyword>
<keyword id="KW-0547">Nucleotide-binding</keyword>
<keyword id="KW-0648">Protein biosynthesis</keyword>
<sequence length="466" mass="52570">MSVVPVADVLQGRVAVDSEVTVRGWVRTRRDSKAGISFLAVYDGSCFDPVQAVINNSLPNYNEDVLRLTTGCSVIVTGKVVASPGQGQQFEIQASKVEVAGWVEDPDTYPMAAKRHSIEYLREVAHLRPRTNLIGAVARVRHTLAQALHRFFNEQGFFWVSTPLITASDTEGAGEMFRVSTLDLENLPRNDQGKVDFDKDFFGKESFLTVSGQLNGETYACALSKIYTFGPTFRAENSNTSRHLAEFWMLEPEVAFANLNDIAGLAEAMLKYVFKAVLEERADDMKFFAERVDKDAVSRLERFIEADFAQVDYTDAVTILENCGRKFENPVYWGVDLSSEHERYLAEEHFKAPVVVKNYPKDIKAFYMRLNEDGKTVAAMDVLAPGIGEIIGGSQREERLDVLDERMLEMGLNKEDYWWYRDLRRYGTVPHSGFGLGFERLIAYVTGVQNVRDVIPFPRTPRNASF</sequence>
<comment type="catalytic activity">
    <reaction evidence="1">
        <text>tRNA(Asn) + L-asparagine + ATP = L-asparaginyl-tRNA(Asn) + AMP + diphosphate + H(+)</text>
        <dbReference type="Rhea" id="RHEA:11180"/>
        <dbReference type="Rhea" id="RHEA-COMP:9659"/>
        <dbReference type="Rhea" id="RHEA-COMP:9674"/>
        <dbReference type="ChEBI" id="CHEBI:15378"/>
        <dbReference type="ChEBI" id="CHEBI:30616"/>
        <dbReference type="ChEBI" id="CHEBI:33019"/>
        <dbReference type="ChEBI" id="CHEBI:58048"/>
        <dbReference type="ChEBI" id="CHEBI:78442"/>
        <dbReference type="ChEBI" id="CHEBI:78515"/>
        <dbReference type="ChEBI" id="CHEBI:456215"/>
        <dbReference type="EC" id="6.1.1.22"/>
    </reaction>
</comment>
<comment type="subunit">
    <text evidence="1">Homodimer.</text>
</comment>
<comment type="subcellular location">
    <subcellularLocation>
        <location evidence="1">Cytoplasm</location>
    </subcellularLocation>
</comment>
<comment type="similarity">
    <text evidence="1">Belongs to the class-II aminoacyl-tRNA synthetase family.</text>
</comment>
<feature type="chain" id="PRO_1000061019" description="Asparagine--tRNA ligase">
    <location>
        <begin position="1"/>
        <end position="466"/>
    </location>
</feature>
<organism>
    <name type="scientific">Escherichia coli O9:H4 (strain HS)</name>
    <dbReference type="NCBI Taxonomy" id="331112"/>
    <lineage>
        <taxon>Bacteria</taxon>
        <taxon>Pseudomonadati</taxon>
        <taxon>Pseudomonadota</taxon>
        <taxon>Gammaproteobacteria</taxon>
        <taxon>Enterobacterales</taxon>
        <taxon>Enterobacteriaceae</taxon>
        <taxon>Escherichia</taxon>
    </lineage>
</organism>
<dbReference type="EC" id="6.1.1.22" evidence="1"/>
<dbReference type="EMBL" id="CP000802">
    <property type="protein sequence ID" value="ABV05387.1"/>
    <property type="molecule type" value="Genomic_DNA"/>
</dbReference>
<dbReference type="RefSeq" id="WP_000117881.1">
    <property type="nucleotide sequence ID" value="NC_009800.1"/>
</dbReference>
<dbReference type="SMR" id="A7ZYN3"/>
<dbReference type="GeneID" id="93776484"/>
<dbReference type="KEGG" id="ecx:EcHS_A1038"/>
<dbReference type="HOGENOM" id="CLU_004553_2_0_6"/>
<dbReference type="GO" id="GO:0005737">
    <property type="term" value="C:cytoplasm"/>
    <property type="evidence" value="ECO:0007669"/>
    <property type="project" value="UniProtKB-SubCell"/>
</dbReference>
<dbReference type="GO" id="GO:0004816">
    <property type="term" value="F:asparagine-tRNA ligase activity"/>
    <property type="evidence" value="ECO:0007669"/>
    <property type="project" value="UniProtKB-UniRule"/>
</dbReference>
<dbReference type="GO" id="GO:0005524">
    <property type="term" value="F:ATP binding"/>
    <property type="evidence" value="ECO:0007669"/>
    <property type="project" value="UniProtKB-UniRule"/>
</dbReference>
<dbReference type="GO" id="GO:0003676">
    <property type="term" value="F:nucleic acid binding"/>
    <property type="evidence" value="ECO:0007669"/>
    <property type="project" value="InterPro"/>
</dbReference>
<dbReference type="GO" id="GO:0006421">
    <property type="term" value="P:asparaginyl-tRNA aminoacylation"/>
    <property type="evidence" value="ECO:0007669"/>
    <property type="project" value="UniProtKB-UniRule"/>
</dbReference>
<dbReference type="CDD" id="cd00776">
    <property type="entry name" value="AsxRS_core"/>
    <property type="match status" value="1"/>
</dbReference>
<dbReference type="CDD" id="cd04318">
    <property type="entry name" value="EcAsnRS_like_N"/>
    <property type="match status" value="1"/>
</dbReference>
<dbReference type="FunFam" id="2.40.50.140:FF:000116">
    <property type="entry name" value="Asparagine--tRNA ligase"/>
    <property type="match status" value="1"/>
</dbReference>
<dbReference type="FunFam" id="3.30.930.10:FF:000016">
    <property type="entry name" value="Asparagine--tRNA ligase"/>
    <property type="match status" value="1"/>
</dbReference>
<dbReference type="Gene3D" id="3.30.930.10">
    <property type="entry name" value="Bira Bifunctional Protein, Domain 2"/>
    <property type="match status" value="1"/>
</dbReference>
<dbReference type="Gene3D" id="2.40.50.140">
    <property type="entry name" value="Nucleic acid-binding proteins"/>
    <property type="match status" value="1"/>
</dbReference>
<dbReference type="HAMAP" id="MF_00534">
    <property type="entry name" value="Asn_tRNA_synth"/>
    <property type="match status" value="1"/>
</dbReference>
<dbReference type="InterPro" id="IPR004364">
    <property type="entry name" value="Aa-tRNA-synt_II"/>
</dbReference>
<dbReference type="InterPro" id="IPR006195">
    <property type="entry name" value="aa-tRNA-synth_II"/>
</dbReference>
<dbReference type="InterPro" id="IPR045864">
    <property type="entry name" value="aa-tRNA-synth_II/BPL/LPL"/>
</dbReference>
<dbReference type="InterPro" id="IPR004522">
    <property type="entry name" value="Asn-tRNA-ligase"/>
</dbReference>
<dbReference type="InterPro" id="IPR002312">
    <property type="entry name" value="Asp/Asn-tRNA-synth_IIb"/>
</dbReference>
<dbReference type="InterPro" id="IPR012340">
    <property type="entry name" value="NA-bd_OB-fold"/>
</dbReference>
<dbReference type="InterPro" id="IPR004365">
    <property type="entry name" value="NA-bd_OB_tRNA"/>
</dbReference>
<dbReference type="NCBIfam" id="TIGR00457">
    <property type="entry name" value="asnS"/>
    <property type="match status" value="1"/>
</dbReference>
<dbReference type="NCBIfam" id="NF003037">
    <property type="entry name" value="PRK03932.1"/>
    <property type="match status" value="1"/>
</dbReference>
<dbReference type="PANTHER" id="PTHR22594:SF34">
    <property type="entry name" value="ASPARAGINE--TRNA LIGASE, MITOCHONDRIAL-RELATED"/>
    <property type="match status" value="1"/>
</dbReference>
<dbReference type="PANTHER" id="PTHR22594">
    <property type="entry name" value="ASPARTYL/LYSYL-TRNA SYNTHETASE"/>
    <property type="match status" value="1"/>
</dbReference>
<dbReference type="Pfam" id="PF00152">
    <property type="entry name" value="tRNA-synt_2"/>
    <property type="match status" value="1"/>
</dbReference>
<dbReference type="Pfam" id="PF01336">
    <property type="entry name" value="tRNA_anti-codon"/>
    <property type="match status" value="1"/>
</dbReference>
<dbReference type="PRINTS" id="PR01042">
    <property type="entry name" value="TRNASYNTHASP"/>
</dbReference>
<dbReference type="SUPFAM" id="SSF55681">
    <property type="entry name" value="Class II aaRS and biotin synthetases"/>
    <property type="match status" value="1"/>
</dbReference>
<dbReference type="SUPFAM" id="SSF50249">
    <property type="entry name" value="Nucleic acid-binding proteins"/>
    <property type="match status" value="1"/>
</dbReference>
<dbReference type="PROSITE" id="PS50862">
    <property type="entry name" value="AA_TRNA_LIGASE_II"/>
    <property type="match status" value="1"/>
</dbReference>
<gene>
    <name evidence="1" type="primary">asnS</name>
    <name type="ordered locus">EcHS_A1038</name>
</gene>
<evidence type="ECO:0000255" key="1">
    <source>
        <dbReference type="HAMAP-Rule" id="MF_00534"/>
    </source>
</evidence>
<protein>
    <recommendedName>
        <fullName evidence="1">Asparagine--tRNA ligase</fullName>
        <ecNumber evidence="1">6.1.1.22</ecNumber>
    </recommendedName>
    <alternativeName>
        <fullName evidence="1">Asparaginyl-tRNA synthetase</fullName>
        <shortName evidence="1">AsnRS</shortName>
    </alternativeName>
</protein>
<proteinExistence type="inferred from homology"/>
<name>SYN_ECOHS</name>
<reference key="1">
    <citation type="journal article" date="2008" name="J. Bacteriol.">
        <title>The pangenome structure of Escherichia coli: comparative genomic analysis of E. coli commensal and pathogenic isolates.</title>
        <authorList>
            <person name="Rasko D.A."/>
            <person name="Rosovitz M.J."/>
            <person name="Myers G.S.A."/>
            <person name="Mongodin E.F."/>
            <person name="Fricke W.F."/>
            <person name="Gajer P."/>
            <person name="Crabtree J."/>
            <person name="Sebaihia M."/>
            <person name="Thomson N.R."/>
            <person name="Chaudhuri R."/>
            <person name="Henderson I.R."/>
            <person name="Sperandio V."/>
            <person name="Ravel J."/>
        </authorList>
    </citation>
    <scope>NUCLEOTIDE SEQUENCE [LARGE SCALE GENOMIC DNA]</scope>
    <source>
        <strain>HS</strain>
    </source>
</reference>
<accession>A7ZYN3</accession>